<reference key="1">
    <citation type="submission" date="2010-04" db="EMBL/GenBank/DDBJ databases">
        <authorList>
            <person name="Reid K.E."/>
            <person name="Liao N."/>
            <person name="Chan S."/>
            <person name="Docking R."/>
            <person name="Taylor G."/>
            <person name="Moore R."/>
            <person name="Mayo M."/>
            <person name="Munro S."/>
            <person name="King J."/>
            <person name="Yanchuk A."/>
            <person name="Holt R."/>
            <person name="Jones S."/>
            <person name="Marra M."/>
            <person name="Ritland C.E."/>
            <person name="Ritland K."/>
            <person name="Bohlmann J."/>
        </authorList>
    </citation>
    <scope>NUCLEOTIDE SEQUENCE [LARGE SCALE MRNA]</scope>
    <source>
        <tissue>Apical bud</tissue>
    </source>
</reference>
<reference key="2">
    <citation type="journal article" date="2014" name="Plant Physiol.">
        <title>Functional and evolutionary analysis of the CASPARIAN STRIP MEMBRANE DOMAIN PROTEIN family.</title>
        <authorList>
            <person name="Roppolo D."/>
            <person name="Boeckmann B."/>
            <person name="Pfister A."/>
            <person name="Boutet E."/>
            <person name="Rubio M.C."/>
            <person name="Denervaud-Tendon V."/>
            <person name="Vermeer J.E."/>
            <person name="Gheyselinck J."/>
            <person name="Xenarios I."/>
            <person name="Geldner N."/>
        </authorList>
    </citation>
    <scope>GENE FAMILY</scope>
    <scope>NOMENCLATURE</scope>
</reference>
<name>CSPLB_PICSI</name>
<keyword id="KW-1003">Cell membrane</keyword>
<keyword id="KW-0325">Glycoprotein</keyword>
<keyword id="KW-0472">Membrane</keyword>
<keyword id="KW-0812">Transmembrane</keyword>
<keyword id="KW-1133">Transmembrane helix</keyword>
<accession>D5ACW4</accession>
<protein>
    <recommendedName>
        <fullName>CASP-like protein 5B1</fullName>
        <shortName>PsCASPL5B1</shortName>
    </recommendedName>
</protein>
<dbReference type="EMBL" id="BT124107">
    <property type="protein sequence ID" value="ADE77383.1"/>
    <property type="status" value="ALT_INIT"/>
    <property type="molecule type" value="mRNA"/>
</dbReference>
<dbReference type="SMR" id="D5ACW4"/>
<dbReference type="OMA" id="CHMFQIS"/>
<dbReference type="GO" id="GO:0005886">
    <property type="term" value="C:plasma membrane"/>
    <property type="evidence" value="ECO:0007669"/>
    <property type="project" value="UniProtKB-SubCell"/>
</dbReference>
<dbReference type="InterPro" id="IPR006702">
    <property type="entry name" value="CASP_dom"/>
</dbReference>
<dbReference type="InterPro" id="IPR045009">
    <property type="entry name" value="CASPL-5"/>
</dbReference>
<dbReference type="PANTHER" id="PTHR32021:SF1">
    <property type="entry name" value="CASP-LIKE PROTEIN 5A1"/>
    <property type="match status" value="1"/>
</dbReference>
<dbReference type="PANTHER" id="PTHR32021">
    <property type="entry name" value="CASP-LIKE PROTEIN 5B3"/>
    <property type="match status" value="1"/>
</dbReference>
<dbReference type="Pfam" id="PF04535">
    <property type="entry name" value="CASP_dom"/>
    <property type="match status" value="1"/>
</dbReference>
<sequence>GDASHAVDHPIGGHPEHEHDLREEEGPLIFPMKDLPGTPGTVGGLALRMGQFIFAAASVVIMVTSDEFINFTAFCYLAAAMALQFLWSFVLATIDVYALLIKRGLPNSILLSLFVVGDWVTATLSLAAACSTAGITVLFDKDLNYCDQMHCRRYQLSATMAFFSWVLIAISSLITLLLLVSE</sequence>
<comment type="subunit">
    <text evidence="1">Homodimer and heterodimers.</text>
</comment>
<comment type="subcellular location">
    <subcellularLocation>
        <location evidence="1">Cell membrane</location>
        <topology evidence="1">Multi-pass membrane protein</topology>
    </subcellularLocation>
</comment>
<comment type="similarity">
    <text evidence="4">Belongs to the Casparian strip membrane proteins (CASP) family.</text>
</comment>
<comment type="sequence caution" evidence="4">
    <conflict type="erroneous initiation">
        <sequence resource="EMBL-CDS" id="ADE77383"/>
    </conflict>
    <text>Truncated N-terminus.</text>
</comment>
<organism>
    <name type="scientific">Picea sitchensis</name>
    <name type="common">Sitka spruce</name>
    <name type="synonym">Pinus sitchensis</name>
    <dbReference type="NCBI Taxonomy" id="3332"/>
    <lineage>
        <taxon>Eukaryota</taxon>
        <taxon>Viridiplantae</taxon>
        <taxon>Streptophyta</taxon>
        <taxon>Embryophyta</taxon>
        <taxon>Tracheophyta</taxon>
        <taxon>Spermatophyta</taxon>
        <taxon>Pinopsida</taxon>
        <taxon>Pinidae</taxon>
        <taxon>Conifers I</taxon>
        <taxon>Pinales</taxon>
        <taxon>Pinaceae</taxon>
        <taxon>Picea</taxon>
    </lineage>
</organism>
<feature type="chain" id="PRO_0000418685" description="CASP-like protein 5B1">
    <location>
        <begin position="1" status="less than"/>
        <end position="182"/>
    </location>
</feature>
<feature type="topological domain" description="Cytoplasmic" evidence="2">
    <location>
        <begin position="1"/>
        <end position="41"/>
    </location>
</feature>
<feature type="transmembrane region" description="Helical" evidence="2">
    <location>
        <begin position="42"/>
        <end position="62"/>
    </location>
</feature>
<feature type="topological domain" description="Extracellular" evidence="2">
    <location>
        <begin position="63"/>
        <end position="73"/>
    </location>
</feature>
<feature type="transmembrane region" description="Helical" evidence="2">
    <location>
        <begin position="74"/>
        <end position="94"/>
    </location>
</feature>
<feature type="topological domain" description="Cytoplasmic" evidence="2">
    <location>
        <begin position="95"/>
        <end position="108"/>
    </location>
</feature>
<feature type="transmembrane region" description="Helical" evidence="2">
    <location>
        <begin position="109"/>
        <end position="129"/>
    </location>
</feature>
<feature type="topological domain" description="Extracellular" evidence="2">
    <location>
        <begin position="130"/>
        <end position="159"/>
    </location>
</feature>
<feature type="transmembrane region" description="Helical" evidence="2">
    <location>
        <begin position="160"/>
        <end position="180"/>
    </location>
</feature>
<feature type="topological domain" description="Cytoplasmic" evidence="2">
    <location>
        <begin position="181"/>
        <end position="182"/>
    </location>
</feature>
<feature type="region of interest" description="Disordered" evidence="3">
    <location>
        <begin position="1"/>
        <end position="20"/>
    </location>
</feature>
<feature type="glycosylation site" description="N-linked (GlcNAc...) asparagine" evidence="2">
    <location>
        <position position="70"/>
    </location>
</feature>
<feature type="non-terminal residue">
    <location>
        <position position="1"/>
    </location>
</feature>
<evidence type="ECO:0000250" key="1"/>
<evidence type="ECO:0000255" key="2"/>
<evidence type="ECO:0000256" key="3">
    <source>
        <dbReference type="SAM" id="MobiDB-lite"/>
    </source>
</evidence>
<evidence type="ECO:0000305" key="4"/>
<proteinExistence type="evidence at transcript level"/>